<keyword id="KW-0131">Cell cycle</keyword>
<keyword id="KW-0160">Chromosomal rearrangement</keyword>
<keyword id="KW-0158">Chromosome</keyword>
<keyword id="KW-0159">Chromosome partition</keyword>
<keyword id="KW-0238">DNA-binding</keyword>
<keyword id="KW-0469">Meiosis</keyword>
<keyword id="KW-0547">Nucleotide-binding</keyword>
<keyword id="KW-0539">Nucleus</keyword>
<name>ZIP2_YEAS7</name>
<gene>
    <name type="primary">ZIP2</name>
    <name type="ORF">SCY_1825</name>
</gene>
<evidence type="ECO:0000250" key="1"/>
<evidence type="ECO:0000305" key="2"/>
<dbReference type="EMBL" id="AAFW02000099">
    <property type="protein sequence ID" value="EDN61880.1"/>
    <property type="molecule type" value="Genomic_DNA"/>
</dbReference>
<dbReference type="SMR" id="A6ZTU2"/>
<dbReference type="HOGENOM" id="CLU_385036_0_0_1"/>
<dbReference type="OrthoDB" id="40973at4893"/>
<dbReference type="Proteomes" id="UP000007060">
    <property type="component" value="Unassembled WGS sequence"/>
</dbReference>
<dbReference type="GO" id="GO:0005694">
    <property type="term" value="C:chromosome"/>
    <property type="evidence" value="ECO:0007669"/>
    <property type="project" value="UniProtKB-SubCell"/>
</dbReference>
<dbReference type="GO" id="GO:0005634">
    <property type="term" value="C:nucleus"/>
    <property type="evidence" value="ECO:0007669"/>
    <property type="project" value="UniProtKB-SubCell"/>
</dbReference>
<dbReference type="GO" id="GO:0003677">
    <property type="term" value="F:DNA binding"/>
    <property type="evidence" value="ECO:0007669"/>
    <property type="project" value="UniProtKB-KW"/>
</dbReference>
<dbReference type="GO" id="GO:0000166">
    <property type="term" value="F:nucleotide binding"/>
    <property type="evidence" value="ECO:0007669"/>
    <property type="project" value="UniProtKB-KW"/>
</dbReference>
<dbReference type="GO" id="GO:0007059">
    <property type="term" value="P:chromosome segregation"/>
    <property type="evidence" value="ECO:0007669"/>
    <property type="project" value="UniProtKB-KW"/>
</dbReference>
<dbReference type="GO" id="GO:0051321">
    <property type="term" value="P:meiotic cell cycle"/>
    <property type="evidence" value="ECO:0007669"/>
    <property type="project" value="UniProtKB-KW"/>
</dbReference>
<dbReference type="Gene3D" id="3.40.50.10130">
    <property type="match status" value="1"/>
</dbReference>
<proteinExistence type="inferred from homology"/>
<organism>
    <name type="scientific">Saccharomyces cerevisiae (strain YJM789)</name>
    <name type="common">Baker's yeast</name>
    <dbReference type="NCBI Taxonomy" id="307796"/>
    <lineage>
        <taxon>Eukaryota</taxon>
        <taxon>Fungi</taxon>
        <taxon>Dikarya</taxon>
        <taxon>Ascomycota</taxon>
        <taxon>Saccharomycotina</taxon>
        <taxon>Saccharomycetes</taxon>
        <taxon>Saccharomycetales</taxon>
        <taxon>Saccharomycetaceae</taxon>
        <taxon>Saccharomyces</taxon>
    </lineage>
</organism>
<accession>A6ZTU2</accession>
<reference key="1">
    <citation type="journal article" date="2007" name="Proc. Natl. Acad. Sci. U.S.A.">
        <title>Genome sequencing and comparative analysis of Saccharomyces cerevisiae strain YJM789.</title>
        <authorList>
            <person name="Wei W."/>
            <person name="McCusker J.H."/>
            <person name="Hyman R.W."/>
            <person name="Jones T."/>
            <person name="Ning Y."/>
            <person name="Cao Z."/>
            <person name="Gu Z."/>
            <person name="Bruno D."/>
            <person name="Miranda M."/>
            <person name="Nguyen M."/>
            <person name="Wilhelmy J."/>
            <person name="Komp C."/>
            <person name="Tamse R."/>
            <person name="Wang X."/>
            <person name="Jia P."/>
            <person name="Luedi P."/>
            <person name="Oefner P.J."/>
            <person name="David L."/>
            <person name="Dietrich F.S."/>
            <person name="Li Y."/>
            <person name="Davis R.W."/>
            <person name="Steinmetz L.M."/>
        </authorList>
    </citation>
    <scope>NUCLEOTIDE SEQUENCE [LARGE SCALE GENOMIC DNA]</scope>
    <source>
        <strain>YJM789</strain>
    </source>
</reference>
<comment type="function">
    <text evidence="1">Required for initiation of meiotic chromosome synapsis. Involved in synaptonemal complex formation, a structure that tethers a pair of homologous chromosomes along their lengths and plays a central role in recombination and homolog segregation during meiosis. Required for the normal localization of MSH4 to chromosomes (By similarity).</text>
</comment>
<comment type="subunit">
    <text evidence="1">Interacts with ZIP3.</text>
</comment>
<comment type="subcellular location">
    <subcellularLocation>
        <location evidence="1">Nucleus</location>
    </subcellularLocation>
    <subcellularLocation>
        <location evidence="1">Chromosome</location>
    </subcellularLocation>
    <text evidence="1">Localizes to a meiosis specific chromosomal structure called the synaptonemal complex (SC) formed during meiotic prophase.</text>
</comment>
<comment type="induction">
    <text evidence="1">During meiosis.</text>
</comment>
<comment type="similarity">
    <text evidence="2">Belongs to the ZIP2 family.</text>
</comment>
<protein>
    <recommendedName>
        <fullName>Protein ZIP2</fullName>
    </recommendedName>
    <alternativeName>
        <fullName>Zipping up meiotic chromosomes protein 2</fullName>
    </alternativeName>
</protein>
<feature type="chain" id="PRO_0000333500" description="Protein ZIP2">
    <location>
        <begin position="1"/>
        <end position="704"/>
    </location>
</feature>
<sequence>MIIERWEVKLSKCNQNVGGYSVLSGNLKENIKLGRRAQKYLKELRNLQLKPLKIGGYENCGTINGEEYFLEVIHITSGRQKIDVAVGKTWNVTNIENDNKEELQYELFKEKLKVEKQDMLFFSWMKSLSVQLNAPLHQKMTEHGLADDNTRLEWFNIPLLRRSQYRKKVPYPSLRQMSSVLEVQCSTLTEEKLNFCVGFSDKPLSEWKPQIFEQTYNRYRLQRISPEKSFKYKSRCSKYNFKTSSQSWVVKVPEHDQQLNTFEKRSDELFDAQFNKLEFFKIRMKKLKKNKPIEKKNYKIWCLEKEDLKDLVWDPLKRICNHSRYAIFEHVTINREAYSIKPLRLTFQKLDSGSLDLIDNQKKTFGSIKLAMSMPDVKKTENQSIEESERHDETAIETQEFDENDCLSSKADINTSLAPQKRSFIDNELMSMLVTKKKRKKDKDVSDTGISSTSYLINSGTYANSHIEIPTSNSVYNGKEDCSFNNYSVKHSILEEDIENKCIAVNENKVIENQKVIQSLCKNSHLDLIEQSYFGECDFIINHSTCVYKIQASRFMQLRNNGSLHYDKAVNDLLTEFQRVIIIVEFSEIIQDVDPDLFWKIKLYLLNSRVDVFFIHETTDFFIDWMKYFIAKWAFSYNDEKEKNIANADILLDLGFNILLVRKIFQTYSLEEFFMAIIKEESKAVKMLTVSQMTRLKKLLTLEW</sequence>